<evidence type="ECO:0000250" key="1"/>
<evidence type="ECO:0000255" key="2">
    <source>
        <dbReference type="PROSITE-ProRule" id="PRU00274"/>
    </source>
</evidence>
<name>TRYP_FELCA</name>
<sequence>FPIDDDDKIVGGYTNR</sequence>
<organism>
    <name type="scientific">Felis catus</name>
    <name type="common">Cat</name>
    <name type="synonym">Felis silvestris catus</name>
    <dbReference type="NCBI Taxonomy" id="9685"/>
    <lineage>
        <taxon>Eukaryota</taxon>
        <taxon>Metazoa</taxon>
        <taxon>Chordata</taxon>
        <taxon>Craniata</taxon>
        <taxon>Vertebrata</taxon>
        <taxon>Euteleostomi</taxon>
        <taxon>Mammalia</taxon>
        <taxon>Eutheria</taxon>
        <taxon>Laurasiatheria</taxon>
        <taxon>Carnivora</taxon>
        <taxon>Feliformia</taxon>
        <taxon>Felidae</taxon>
        <taxon>Felinae</taxon>
        <taxon>Felis</taxon>
    </lineage>
</organism>
<comment type="catalytic activity">
    <reaction>
        <text>Preferential cleavage: Arg-|-Xaa, Lys-|-Xaa.</text>
        <dbReference type="EC" id="3.4.21.4"/>
    </reaction>
</comment>
<comment type="cofactor">
    <cofactor evidence="1">
        <name>Ca(2+)</name>
        <dbReference type="ChEBI" id="CHEBI:29108"/>
    </cofactor>
    <text evidence="1">Binds 1 Ca(2+) ion per subunit.</text>
</comment>
<comment type="subcellular location">
    <subcellularLocation>
        <location>Secreted</location>
        <location>Extracellular space</location>
    </subcellularLocation>
</comment>
<comment type="similarity">
    <text evidence="2">Belongs to the peptidase S1 family.</text>
</comment>
<reference key="1">
    <citation type="journal article" date="1997" name="Comp. Biochem. Physiol.">
        <title>Purification and partial characterization of feline trypsin.</title>
        <authorList>
            <person name="Steiner J.M."/>
            <person name="Medinger T.L."/>
            <person name="Williams D.A."/>
        </authorList>
    </citation>
    <scope>PROTEIN SEQUENCE</scope>
    <source>
        <tissue>Pancreas</tissue>
    </source>
</reference>
<feature type="propeptide" id="PRO_0000028195" description="Activation peptide">
    <location>
        <begin position="1"/>
        <end position="8"/>
    </location>
</feature>
<feature type="chain" id="PRO_0000028196" description="Trypsin">
    <location>
        <begin position="9"/>
        <end position="16" status="greater than"/>
    </location>
</feature>
<feature type="non-terminal residue">
    <location>
        <position position="16"/>
    </location>
</feature>
<keyword id="KW-0106">Calcium</keyword>
<keyword id="KW-0222">Digestion</keyword>
<keyword id="KW-0903">Direct protein sequencing</keyword>
<keyword id="KW-0378">Hydrolase</keyword>
<keyword id="KW-0645">Protease</keyword>
<keyword id="KW-1185">Reference proteome</keyword>
<keyword id="KW-0964">Secreted</keyword>
<keyword id="KW-0720">Serine protease</keyword>
<keyword id="KW-0865">Zymogen</keyword>
<dbReference type="EC" id="3.4.21.4"/>
<dbReference type="PaxDb" id="9685-ENSFCAP00000015868"/>
<dbReference type="eggNOG" id="KOG3627">
    <property type="taxonomic scope" value="Eukaryota"/>
</dbReference>
<dbReference type="InParanoid" id="P81071"/>
<dbReference type="Proteomes" id="UP000011712">
    <property type="component" value="Unplaced"/>
</dbReference>
<dbReference type="GO" id="GO:0005576">
    <property type="term" value="C:extracellular region"/>
    <property type="evidence" value="ECO:0007669"/>
    <property type="project" value="UniProtKB-SubCell"/>
</dbReference>
<dbReference type="GO" id="GO:0004252">
    <property type="term" value="F:serine-type endopeptidase activity"/>
    <property type="evidence" value="ECO:0007669"/>
    <property type="project" value="UniProtKB-EC"/>
</dbReference>
<dbReference type="GO" id="GO:0007586">
    <property type="term" value="P:digestion"/>
    <property type="evidence" value="ECO:0007669"/>
    <property type="project" value="UniProtKB-KW"/>
</dbReference>
<dbReference type="GO" id="GO:0006508">
    <property type="term" value="P:proteolysis"/>
    <property type="evidence" value="ECO:0007669"/>
    <property type="project" value="UniProtKB-KW"/>
</dbReference>
<proteinExistence type="evidence at protein level"/>
<accession>P81071</accession>
<protein>
    <recommendedName>
        <fullName>Trypsin</fullName>
        <ecNumber>3.4.21.4</ecNumber>
    </recommendedName>
</protein>